<gene>
    <name type="primary">ndhF</name>
</gene>
<sequence>HFQNYSSTKEGSLYSISLWGNRIPKGVNKDFVLSTTKSEVSFFSQNISISKGQGNTRNRTGSFSTSFGSKNLFTYPHETGNTMLFPLLILLLFTFFIGFIGIPFDNRTMDNGIVRLTILSKWLIPSINFTQESSNFSINSYEFITNAISSVSLAILGLFIAYIFYGSAYSFFQNLDLQNSFYKGSPKKNFFYQVKKKIYSWSYNRGYIDIFYSR</sequence>
<comment type="function">
    <text evidence="1">NDH shuttles electrons from NAD(P)H:plastoquinone, via FMN and iron-sulfur (Fe-S) centers, to quinones in the photosynthetic chain and possibly in a chloroplast respiratory chain. The immediate electron acceptor for the enzyme in this species is believed to be plastoquinone. Couples the redox reaction to proton translocation, and thus conserves the redox energy in a proton gradient (By similarity).</text>
</comment>
<comment type="catalytic activity">
    <reaction>
        <text>a plastoquinone + NADH + (n+1) H(+)(in) = a plastoquinol + NAD(+) + n H(+)(out)</text>
        <dbReference type="Rhea" id="RHEA:42608"/>
        <dbReference type="Rhea" id="RHEA-COMP:9561"/>
        <dbReference type="Rhea" id="RHEA-COMP:9562"/>
        <dbReference type="ChEBI" id="CHEBI:15378"/>
        <dbReference type="ChEBI" id="CHEBI:17757"/>
        <dbReference type="ChEBI" id="CHEBI:57540"/>
        <dbReference type="ChEBI" id="CHEBI:57945"/>
        <dbReference type="ChEBI" id="CHEBI:62192"/>
    </reaction>
</comment>
<comment type="catalytic activity">
    <reaction>
        <text>a plastoquinone + NADPH + (n+1) H(+)(in) = a plastoquinol + NADP(+) + n H(+)(out)</text>
        <dbReference type="Rhea" id="RHEA:42612"/>
        <dbReference type="Rhea" id="RHEA-COMP:9561"/>
        <dbReference type="Rhea" id="RHEA-COMP:9562"/>
        <dbReference type="ChEBI" id="CHEBI:15378"/>
        <dbReference type="ChEBI" id="CHEBI:17757"/>
        <dbReference type="ChEBI" id="CHEBI:57783"/>
        <dbReference type="ChEBI" id="CHEBI:58349"/>
        <dbReference type="ChEBI" id="CHEBI:62192"/>
    </reaction>
</comment>
<comment type="subunit">
    <text evidence="1">NDH is composed of at least 16 different subunits, 5 of which are encoded in the nucleus.</text>
</comment>
<comment type="subcellular location">
    <subcellularLocation>
        <location evidence="1">Plastid</location>
        <location evidence="1">Chloroplast thylakoid membrane</location>
        <topology evidence="1">Multi-pass membrane protein</topology>
    </subcellularLocation>
</comment>
<comment type="similarity">
    <text evidence="3">Belongs to the complex I subunit 5 family.</text>
</comment>
<evidence type="ECO:0000250" key="1"/>
<evidence type="ECO:0000255" key="2"/>
<evidence type="ECO:0000305" key="3"/>
<protein>
    <recommendedName>
        <fullName>NAD(P)H-quinone oxidoreductase subunit 5, chloroplastic</fullName>
        <ecNumber>7.1.1.-</ecNumber>
    </recommendedName>
    <alternativeName>
        <fullName>NAD(P)H dehydrogenase subunit 5</fullName>
    </alternativeName>
    <alternativeName>
        <fullName>NADH-plastoquinone oxidoreductase subunit 5</fullName>
    </alternativeName>
</protein>
<reference key="1">
    <citation type="journal article" date="1997" name="Mol. Phylogenet. Evol.">
        <title>Phylogeny of Poaceae subfamily Pooideae based on chloroplast ndhF gene sequences.</title>
        <authorList>
            <person name="Catalan P."/>
            <person name="Kellogg E.A."/>
            <person name="Olmstead R.G."/>
        </authorList>
    </citation>
    <scope>NUCLEOTIDE SEQUENCE [GENOMIC DNA]</scope>
</reference>
<feature type="chain" id="PRO_0000118176" description="NAD(P)H-quinone oxidoreductase subunit 5, chloroplastic">
    <location>
        <begin position="1" status="less than"/>
        <end position="214" status="greater than"/>
    </location>
</feature>
<feature type="transmembrane region" description="Helical" evidence="2">
    <location>
        <begin position="84"/>
        <end position="104"/>
    </location>
</feature>
<feature type="transmembrane region" description="Helical" evidence="2">
    <location>
        <begin position="152"/>
        <end position="172"/>
    </location>
</feature>
<feature type="non-terminal residue">
    <location>
        <position position="1"/>
    </location>
</feature>
<feature type="non-terminal residue">
    <location>
        <position position="214"/>
    </location>
</feature>
<geneLocation type="chloroplast"/>
<organism>
    <name type="scientific">Brachypodium sylvaticum</name>
    <name type="common">False brome</name>
    <dbReference type="NCBI Taxonomy" id="29664"/>
    <lineage>
        <taxon>Eukaryota</taxon>
        <taxon>Viridiplantae</taxon>
        <taxon>Streptophyta</taxon>
        <taxon>Embryophyta</taxon>
        <taxon>Tracheophyta</taxon>
        <taxon>Spermatophyta</taxon>
        <taxon>Magnoliopsida</taxon>
        <taxon>Liliopsida</taxon>
        <taxon>Poales</taxon>
        <taxon>Poaceae</taxon>
        <taxon>BOP clade</taxon>
        <taxon>Pooideae</taxon>
        <taxon>Stipodae</taxon>
        <taxon>Brachypodieae</taxon>
        <taxon>Brachypodium</taxon>
    </lineage>
</organism>
<dbReference type="EC" id="7.1.1.-"/>
<dbReference type="EMBL" id="U71040">
    <property type="protein sequence ID" value="AAB39667.1"/>
    <property type="molecule type" value="Genomic_DNA"/>
</dbReference>
<dbReference type="PIR" id="T12655">
    <property type="entry name" value="T12655"/>
</dbReference>
<dbReference type="GO" id="GO:0009535">
    <property type="term" value="C:chloroplast thylakoid membrane"/>
    <property type="evidence" value="ECO:0007669"/>
    <property type="project" value="UniProtKB-SubCell"/>
</dbReference>
<dbReference type="GO" id="GO:0008137">
    <property type="term" value="F:NADH dehydrogenase (ubiquinone) activity"/>
    <property type="evidence" value="ECO:0007669"/>
    <property type="project" value="InterPro"/>
</dbReference>
<dbReference type="GO" id="GO:0048038">
    <property type="term" value="F:quinone binding"/>
    <property type="evidence" value="ECO:0007669"/>
    <property type="project" value="UniProtKB-KW"/>
</dbReference>
<dbReference type="GO" id="GO:0042773">
    <property type="term" value="P:ATP synthesis coupled electron transport"/>
    <property type="evidence" value="ECO:0007669"/>
    <property type="project" value="InterPro"/>
</dbReference>
<dbReference type="GO" id="GO:0015990">
    <property type="term" value="P:electron transport coupled proton transport"/>
    <property type="evidence" value="ECO:0007669"/>
    <property type="project" value="TreeGrafter"/>
</dbReference>
<dbReference type="InterPro" id="IPR002128">
    <property type="entry name" value="NADH_UbQ_OxRdtase_chlpt_su5_C"/>
</dbReference>
<dbReference type="InterPro" id="IPR003945">
    <property type="entry name" value="NU5C-like"/>
</dbReference>
<dbReference type="PANTHER" id="PTHR42829">
    <property type="entry name" value="NADH-UBIQUINONE OXIDOREDUCTASE CHAIN 5"/>
    <property type="match status" value="1"/>
</dbReference>
<dbReference type="PANTHER" id="PTHR42829:SF2">
    <property type="entry name" value="NADH-UBIQUINONE OXIDOREDUCTASE CHAIN 5"/>
    <property type="match status" value="1"/>
</dbReference>
<dbReference type="Pfam" id="PF01010">
    <property type="entry name" value="Proton_antipo_C"/>
    <property type="match status" value="1"/>
</dbReference>
<name>NU5C_BRASY</name>
<accession>P92251</accession>
<keyword id="KW-0150">Chloroplast</keyword>
<keyword id="KW-0472">Membrane</keyword>
<keyword id="KW-0520">NAD</keyword>
<keyword id="KW-0521">NADP</keyword>
<keyword id="KW-0934">Plastid</keyword>
<keyword id="KW-0618">Plastoquinone</keyword>
<keyword id="KW-0874">Quinone</keyword>
<keyword id="KW-0793">Thylakoid</keyword>
<keyword id="KW-1278">Translocase</keyword>
<keyword id="KW-0812">Transmembrane</keyword>
<keyword id="KW-1133">Transmembrane helix</keyword>
<keyword id="KW-0813">Transport</keyword>
<proteinExistence type="inferred from homology"/>